<proteinExistence type="inferred from homology"/>
<keyword id="KW-0997">Cell inner membrane</keyword>
<keyword id="KW-1003">Cell membrane</keyword>
<keyword id="KW-0472">Membrane</keyword>
<keyword id="KW-0520">NAD</keyword>
<keyword id="KW-0874">Quinone</keyword>
<keyword id="KW-1185">Reference proteome</keyword>
<keyword id="KW-1278">Translocase</keyword>
<keyword id="KW-0812">Transmembrane</keyword>
<keyword id="KW-1133">Transmembrane helix</keyword>
<keyword id="KW-0830">Ubiquinone</keyword>
<sequence length="343" mass="38352">MDSAFIIEKSVVIVAVFALTMLMAMYSTWAERKVAAFLQDRVGPNRAGWGGLLQPLADGLKLFSKEEFEPNTPNKFLFVVGPAIAMSTALMTSAVIPWGDKLHLFGRDILLQATDIDNALLYIFAVVSVGVYGIMIGGWASNNKFSLMGAVRAASQMVSYEVAMGLSMIALLMMTGTLSLKEISAQQSGMNWNVFYQPVSFLIFLICAFAETNRTPFDLAECESELIGGYHTEYSSMKMGFYLFAEYANMFISSAILAILFFGGYNYPGMQWMVENVGVNTANILGFLALFIKICGFIFFYMWVRWTIPRFRYDQLMHLGWRILIPLAILNIMVTGICLLLFK</sequence>
<organism>
    <name type="scientific">Flavobacterium psychrophilum (strain ATCC 49511 / DSM 21280 / CIP 103535 / JIP02/86)</name>
    <dbReference type="NCBI Taxonomy" id="402612"/>
    <lineage>
        <taxon>Bacteria</taxon>
        <taxon>Pseudomonadati</taxon>
        <taxon>Bacteroidota</taxon>
        <taxon>Flavobacteriia</taxon>
        <taxon>Flavobacteriales</taxon>
        <taxon>Flavobacteriaceae</taxon>
        <taxon>Flavobacterium</taxon>
    </lineage>
</organism>
<gene>
    <name evidence="1" type="primary">nuoH</name>
    <name type="ordered locus">FP2224</name>
</gene>
<reference key="1">
    <citation type="journal article" date="2007" name="Nat. Biotechnol.">
        <title>Complete genome sequence of the fish pathogen Flavobacterium psychrophilum.</title>
        <authorList>
            <person name="Duchaud E."/>
            <person name="Boussaha M."/>
            <person name="Loux V."/>
            <person name="Bernardet J.-F."/>
            <person name="Michel C."/>
            <person name="Kerouault B."/>
            <person name="Mondot S."/>
            <person name="Nicolas P."/>
            <person name="Bossy R."/>
            <person name="Caron C."/>
            <person name="Bessieres P."/>
            <person name="Gibrat J.-F."/>
            <person name="Claverol S."/>
            <person name="Dumetz F."/>
            <person name="Le Henaff M."/>
            <person name="Benmansour A."/>
        </authorList>
    </citation>
    <scope>NUCLEOTIDE SEQUENCE [LARGE SCALE GENOMIC DNA]</scope>
    <source>
        <strain>ATCC 49511 / DSM 21280 / CIP 103535 / JIP02/86</strain>
    </source>
</reference>
<comment type="function">
    <text evidence="1">NDH-1 shuttles electrons from NADH, via FMN and iron-sulfur (Fe-S) centers, to quinones in the respiratory chain. The immediate electron acceptor for the enzyme in this species is believed to be ubiquinone. Couples the redox reaction to proton translocation (for every two electrons transferred, four hydrogen ions are translocated across the cytoplasmic membrane), and thus conserves the redox energy in a proton gradient. This subunit may bind ubiquinone.</text>
</comment>
<comment type="catalytic activity">
    <reaction evidence="1">
        <text>a quinone + NADH + 5 H(+)(in) = a quinol + NAD(+) + 4 H(+)(out)</text>
        <dbReference type="Rhea" id="RHEA:57888"/>
        <dbReference type="ChEBI" id="CHEBI:15378"/>
        <dbReference type="ChEBI" id="CHEBI:24646"/>
        <dbReference type="ChEBI" id="CHEBI:57540"/>
        <dbReference type="ChEBI" id="CHEBI:57945"/>
        <dbReference type="ChEBI" id="CHEBI:132124"/>
    </reaction>
</comment>
<comment type="subunit">
    <text evidence="1">NDH-1 is composed of 14 different subunits. Subunits NuoA, H, J, K, L, M, N constitute the membrane sector of the complex.</text>
</comment>
<comment type="subcellular location">
    <subcellularLocation>
        <location evidence="1">Cell inner membrane</location>
        <topology evidence="1">Multi-pass membrane protein</topology>
    </subcellularLocation>
</comment>
<comment type="similarity">
    <text evidence="1">Belongs to the complex I subunit 1 family.</text>
</comment>
<evidence type="ECO:0000255" key="1">
    <source>
        <dbReference type="HAMAP-Rule" id="MF_01350"/>
    </source>
</evidence>
<protein>
    <recommendedName>
        <fullName evidence="1">NADH-quinone oxidoreductase subunit H</fullName>
        <ecNumber evidence="1">7.1.1.-</ecNumber>
    </recommendedName>
    <alternativeName>
        <fullName evidence="1">NADH dehydrogenase I subunit H</fullName>
    </alternativeName>
    <alternativeName>
        <fullName evidence="1">NDH-1 subunit H</fullName>
    </alternativeName>
</protein>
<dbReference type="EC" id="7.1.1.-" evidence="1"/>
<dbReference type="EMBL" id="AM398681">
    <property type="protein sequence ID" value="CAL44280.1"/>
    <property type="molecule type" value="Genomic_DNA"/>
</dbReference>
<dbReference type="RefSeq" id="WP_011964314.1">
    <property type="nucleotide sequence ID" value="NC_009613.3"/>
</dbReference>
<dbReference type="RefSeq" id="YP_001297081.1">
    <property type="nucleotide sequence ID" value="NC_009613.3"/>
</dbReference>
<dbReference type="SMR" id="A6H1Q6"/>
<dbReference type="STRING" id="402612.FP2224"/>
<dbReference type="EnsemblBacteria" id="CAL44280">
    <property type="protein sequence ID" value="CAL44280"/>
    <property type="gene ID" value="FP2224"/>
</dbReference>
<dbReference type="GeneID" id="66553328"/>
<dbReference type="KEGG" id="fps:FP2224"/>
<dbReference type="PATRIC" id="fig|402612.5.peg.2274"/>
<dbReference type="eggNOG" id="COG1005">
    <property type="taxonomic scope" value="Bacteria"/>
</dbReference>
<dbReference type="HOGENOM" id="CLU_015134_0_1_10"/>
<dbReference type="OrthoDB" id="9803734at2"/>
<dbReference type="Proteomes" id="UP000006394">
    <property type="component" value="Chromosome"/>
</dbReference>
<dbReference type="GO" id="GO:0005886">
    <property type="term" value="C:plasma membrane"/>
    <property type="evidence" value="ECO:0007669"/>
    <property type="project" value="UniProtKB-SubCell"/>
</dbReference>
<dbReference type="GO" id="GO:0003954">
    <property type="term" value="F:NADH dehydrogenase activity"/>
    <property type="evidence" value="ECO:0007669"/>
    <property type="project" value="TreeGrafter"/>
</dbReference>
<dbReference type="GO" id="GO:0016655">
    <property type="term" value="F:oxidoreductase activity, acting on NAD(P)H, quinone or similar compound as acceptor"/>
    <property type="evidence" value="ECO:0007669"/>
    <property type="project" value="UniProtKB-UniRule"/>
</dbReference>
<dbReference type="GO" id="GO:0048038">
    <property type="term" value="F:quinone binding"/>
    <property type="evidence" value="ECO:0007669"/>
    <property type="project" value="UniProtKB-KW"/>
</dbReference>
<dbReference type="GO" id="GO:0009060">
    <property type="term" value="P:aerobic respiration"/>
    <property type="evidence" value="ECO:0007669"/>
    <property type="project" value="TreeGrafter"/>
</dbReference>
<dbReference type="HAMAP" id="MF_01350">
    <property type="entry name" value="NDH1_NuoH"/>
    <property type="match status" value="1"/>
</dbReference>
<dbReference type="InterPro" id="IPR001694">
    <property type="entry name" value="NADH_UbQ_OxRdtase_su1/FPO"/>
</dbReference>
<dbReference type="InterPro" id="IPR018086">
    <property type="entry name" value="NADH_UbQ_OxRdtase_su1_CS"/>
</dbReference>
<dbReference type="NCBIfam" id="NF004741">
    <property type="entry name" value="PRK06076.1-2"/>
    <property type="match status" value="1"/>
</dbReference>
<dbReference type="PANTHER" id="PTHR11432">
    <property type="entry name" value="NADH DEHYDROGENASE SUBUNIT 1"/>
    <property type="match status" value="1"/>
</dbReference>
<dbReference type="PANTHER" id="PTHR11432:SF3">
    <property type="entry name" value="NADH-UBIQUINONE OXIDOREDUCTASE CHAIN 1"/>
    <property type="match status" value="1"/>
</dbReference>
<dbReference type="Pfam" id="PF00146">
    <property type="entry name" value="NADHdh"/>
    <property type="match status" value="1"/>
</dbReference>
<dbReference type="PROSITE" id="PS00667">
    <property type="entry name" value="COMPLEX1_ND1_1"/>
    <property type="match status" value="1"/>
</dbReference>
<dbReference type="PROSITE" id="PS00668">
    <property type="entry name" value="COMPLEX1_ND1_2"/>
    <property type="match status" value="1"/>
</dbReference>
<name>NUOH_FLAPJ</name>
<feature type="chain" id="PRO_0000299935" description="NADH-quinone oxidoreductase subunit H">
    <location>
        <begin position="1"/>
        <end position="343"/>
    </location>
</feature>
<feature type="transmembrane region" description="Helical" evidence="1">
    <location>
        <begin position="5"/>
        <end position="25"/>
    </location>
</feature>
<feature type="transmembrane region" description="Helical" evidence="1">
    <location>
        <begin position="76"/>
        <end position="96"/>
    </location>
</feature>
<feature type="transmembrane region" description="Helical" evidence="1">
    <location>
        <begin position="119"/>
        <end position="139"/>
    </location>
</feature>
<feature type="transmembrane region" description="Helical" evidence="1">
    <location>
        <begin position="158"/>
        <end position="178"/>
    </location>
</feature>
<feature type="transmembrane region" description="Helical" evidence="1">
    <location>
        <begin position="190"/>
        <end position="210"/>
    </location>
</feature>
<feature type="transmembrane region" description="Helical" evidence="1">
    <location>
        <begin position="243"/>
        <end position="263"/>
    </location>
</feature>
<feature type="transmembrane region" description="Helical" evidence="1">
    <location>
        <begin position="284"/>
        <end position="304"/>
    </location>
</feature>
<feature type="transmembrane region" description="Helical" evidence="1">
    <location>
        <begin position="323"/>
        <end position="343"/>
    </location>
</feature>
<accession>A6H1Q6</accession>